<comment type="function">
    <text evidence="1">Binds the lower part of the 30S subunit head. Binds mRNA in the 70S ribosome, positioning it for translation.</text>
</comment>
<comment type="subunit">
    <text evidence="1">Part of the 30S ribosomal subunit. Forms a tight complex with proteins S10 and S14.</text>
</comment>
<comment type="similarity">
    <text evidence="1">Belongs to the universal ribosomal protein uS3 family.</text>
</comment>
<reference key="1">
    <citation type="submission" date="2007-09" db="EMBL/GenBank/DDBJ databases">
        <title>Complete genome sequencing of Rickettsia bellii.</title>
        <authorList>
            <person name="Madan A."/>
            <person name="Lee H."/>
            <person name="Madan A."/>
            <person name="Yoon J.-G."/>
            <person name="Ryu G.-Y."/>
            <person name="Dasch G."/>
            <person name="Ereemeva M."/>
        </authorList>
    </citation>
    <scope>NUCLEOTIDE SEQUENCE [LARGE SCALE GENOMIC DNA]</scope>
    <source>
        <strain>OSU 85-389</strain>
    </source>
</reference>
<sequence length="217" mass="24519">MGQKVCAHGFRVGPTLIKGWDSVFYAEKQYKTLFIQDLKIRELVNKSFTQAQVSRILIERPSNKSIIININAKKPNIIIGKNGSEIDKLKKAIEKMTSLSEVYINIHEVRKFNIDAAIVAQTIASQLEKRVSFRKAMKTAIQASFKQGGQGIRVSCSGRLGGAEIARTEWYIEGRMPLHTLRADIDYSTAEAITTYGVIGVKVWIYKGEYTENKRYN</sequence>
<evidence type="ECO:0000255" key="1">
    <source>
        <dbReference type="HAMAP-Rule" id="MF_01309"/>
    </source>
</evidence>
<evidence type="ECO:0000305" key="2"/>
<feature type="chain" id="PRO_1000086148" description="Small ribosomal subunit protein uS3">
    <location>
        <begin position="1"/>
        <end position="217"/>
    </location>
</feature>
<feature type="domain" description="KH type-2" evidence="1">
    <location>
        <begin position="40"/>
        <end position="110"/>
    </location>
</feature>
<name>RS3_RICB8</name>
<dbReference type="EMBL" id="CP000849">
    <property type="protein sequence ID" value="ABV78797.1"/>
    <property type="molecule type" value="Genomic_DNA"/>
</dbReference>
<dbReference type="RefSeq" id="WP_011477715.1">
    <property type="nucleotide sequence ID" value="NC_009883.1"/>
</dbReference>
<dbReference type="SMR" id="A8GVC0"/>
<dbReference type="KEGG" id="rbo:A1I_02065"/>
<dbReference type="HOGENOM" id="CLU_058591_0_2_5"/>
<dbReference type="GO" id="GO:0022627">
    <property type="term" value="C:cytosolic small ribosomal subunit"/>
    <property type="evidence" value="ECO:0007669"/>
    <property type="project" value="TreeGrafter"/>
</dbReference>
<dbReference type="GO" id="GO:0003729">
    <property type="term" value="F:mRNA binding"/>
    <property type="evidence" value="ECO:0007669"/>
    <property type="project" value="UniProtKB-UniRule"/>
</dbReference>
<dbReference type="GO" id="GO:0019843">
    <property type="term" value="F:rRNA binding"/>
    <property type="evidence" value="ECO:0007669"/>
    <property type="project" value="UniProtKB-UniRule"/>
</dbReference>
<dbReference type="GO" id="GO:0003735">
    <property type="term" value="F:structural constituent of ribosome"/>
    <property type="evidence" value="ECO:0007669"/>
    <property type="project" value="InterPro"/>
</dbReference>
<dbReference type="GO" id="GO:0006412">
    <property type="term" value="P:translation"/>
    <property type="evidence" value="ECO:0007669"/>
    <property type="project" value="UniProtKB-UniRule"/>
</dbReference>
<dbReference type="CDD" id="cd02412">
    <property type="entry name" value="KH-II_30S_S3"/>
    <property type="match status" value="1"/>
</dbReference>
<dbReference type="FunFam" id="3.30.300.20:FF:000001">
    <property type="entry name" value="30S ribosomal protein S3"/>
    <property type="match status" value="1"/>
</dbReference>
<dbReference type="Gene3D" id="3.30.300.20">
    <property type="match status" value="1"/>
</dbReference>
<dbReference type="Gene3D" id="3.30.1140.32">
    <property type="entry name" value="Ribosomal protein S3, C-terminal domain"/>
    <property type="match status" value="1"/>
</dbReference>
<dbReference type="HAMAP" id="MF_01309_B">
    <property type="entry name" value="Ribosomal_uS3_B"/>
    <property type="match status" value="1"/>
</dbReference>
<dbReference type="InterPro" id="IPR004087">
    <property type="entry name" value="KH_dom"/>
</dbReference>
<dbReference type="InterPro" id="IPR015946">
    <property type="entry name" value="KH_dom-like_a/b"/>
</dbReference>
<dbReference type="InterPro" id="IPR004044">
    <property type="entry name" value="KH_dom_type_2"/>
</dbReference>
<dbReference type="InterPro" id="IPR009019">
    <property type="entry name" value="KH_sf_prok-type"/>
</dbReference>
<dbReference type="InterPro" id="IPR036419">
    <property type="entry name" value="Ribosomal_S3_C_sf"/>
</dbReference>
<dbReference type="InterPro" id="IPR005704">
    <property type="entry name" value="Ribosomal_uS3_bac-typ"/>
</dbReference>
<dbReference type="InterPro" id="IPR001351">
    <property type="entry name" value="Ribosomal_uS3_C"/>
</dbReference>
<dbReference type="InterPro" id="IPR018280">
    <property type="entry name" value="Ribosomal_uS3_CS"/>
</dbReference>
<dbReference type="NCBIfam" id="TIGR01009">
    <property type="entry name" value="rpsC_bact"/>
    <property type="match status" value="1"/>
</dbReference>
<dbReference type="PANTHER" id="PTHR11760">
    <property type="entry name" value="30S/40S RIBOSOMAL PROTEIN S3"/>
    <property type="match status" value="1"/>
</dbReference>
<dbReference type="PANTHER" id="PTHR11760:SF19">
    <property type="entry name" value="SMALL RIBOSOMAL SUBUNIT PROTEIN US3C"/>
    <property type="match status" value="1"/>
</dbReference>
<dbReference type="Pfam" id="PF07650">
    <property type="entry name" value="KH_2"/>
    <property type="match status" value="1"/>
</dbReference>
<dbReference type="Pfam" id="PF00189">
    <property type="entry name" value="Ribosomal_S3_C"/>
    <property type="match status" value="1"/>
</dbReference>
<dbReference type="SMART" id="SM00322">
    <property type="entry name" value="KH"/>
    <property type="match status" value="1"/>
</dbReference>
<dbReference type="SUPFAM" id="SSF54814">
    <property type="entry name" value="Prokaryotic type KH domain (KH-domain type II)"/>
    <property type="match status" value="1"/>
</dbReference>
<dbReference type="SUPFAM" id="SSF54821">
    <property type="entry name" value="Ribosomal protein S3 C-terminal domain"/>
    <property type="match status" value="1"/>
</dbReference>
<dbReference type="PROSITE" id="PS50823">
    <property type="entry name" value="KH_TYPE_2"/>
    <property type="match status" value="1"/>
</dbReference>
<dbReference type="PROSITE" id="PS00548">
    <property type="entry name" value="RIBOSOMAL_S3"/>
    <property type="match status" value="1"/>
</dbReference>
<gene>
    <name evidence="1" type="primary">rpsC</name>
    <name type="ordered locus">A1I_02065</name>
</gene>
<accession>A8GVC0</accession>
<organism>
    <name type="scientific">Rickettsia bellii (strain OSU 85-389)</name>
    <dbReference type="NCBI Taxonomy" id="391896"/>
    <lineage>
        <taxon>Bacteria</taxon>
        <taxon>Pseudomonadati</taxon>
        <taxon>Pseudomonadota</taxon>
        <taxon>Alphaproteobacteria</taxon>
        <taxon>Rickettsiales</taxon>
        <taxon>Rickettsiaceae</taxon>
        <taxon>Rickettsieae</taxon>
        <taxon>Rickettsia</taxon>
        <taxon>belli group</taxon>
    </lineage>
</organism>
<keyword id="KW-0687">Ribonucleoprotein</keyword>
<keyword id="KW-0689">Ribosomal protein</keyword>
<keyword id="KW-0694">RNA-binding</keyword>
<keyword id="KW-0699">rRNA-binding</keyword>
<protein>
    <recommendedName>
        <fullName evidence="1">Small ribosomal subunit protein uS3</fullName>
    </recommendedName>
    <alternativeName>
        <fullName evidence="2">30S ribosomal protein S3</fullName>
    </alternativeName>
</protein>
<proteinExistence type="inferred from homology"/>